<gene>
    <name type="ordered locus">MT2996</name>
</gene>
<comment type="similarity">
    <text evidence="1">To M.leprae ML1660.</text>
</comment>
<comment type="sequence caution" evidence="1">
    <conflict type="erroneous initiation">
        <sequence resource="EMBL-CDS" id="AAK47323"/>
    </conflict>
</comment>
<dbReference type="EMBL" id="AE000516">
    <property type="protein sequence ID" value="AAK47323.1"/>
    <property type="status" value="ALT_INIT"/>
    <property type="molecule type" value="Genomic_DNA"/>
</dbReference>
<dbReference type="PIR" id="F70748">
    <property type="entry name" value="F70748"/>
</dbReference>
<dbReference type="KEGG" id="mtc:MT2996"/>
<dbReference type="PATRIC" id="fig|83331.31.peg.3236"/>
<dbReference type="HOGENOM" id="CLU_100236_0_0_11"/>
<dbReference type="Proteomes" id="UP000001020">
    <property type="component" value="Chromosome"/>
</dbReference>
<dbReference type="InterPro" id="IPR003772">
    <property type="entry name" value="YceD"/>
</dbReference>
<dbReference type="PANTHER" id="PTHR34374">
    <property type="entry name" value="LARGE RIBOSOMAL RNA SUBUNIT ACCUMULATION PROTEIN YCED HOMOLOG 1, CHLOROPLASTIC"/>
    <property type="match status" value="1"/>
</dbReference>
<dbReference type="PANTHER" id="PTHR34374:SF1">
    <property type="entry name" value="LARGE RIBOSOMAL RNA SUBUNIT ACCUMULATION PROTEIN YCED HOMOLOG 1, CHLOROPLASTIC"/>
    <property type="match status" value="1"/>
</dbReference>
<dbReference type="Pfam" id="PF02620">
    <property type="entry name" value="YceD"/>
    <property type="match status" value="1"/>
</dbReference>
<keyword id="KW-1185">Reference proteome</keyword>
<organism>
    <name type="scientific">Mycobacterium tuberculosis (strain CDC 1551 / Oshkosh)</name>
    <dbReference type="NCBI Taxonomy" id="83331"/>
    <lineage>
        <taxon>Bacteria</taxon>
        <taxon>Bacillati</taxon>
        <taxon>Actinomycetota</taxon>
        <taxon>Actinomycetes</taxon>
        <taxon>Mycobacteriales</taxon>
        <taxon>Mycobacteriaceae</taxon>
        <taxon>Mycobacterium</taxon>
        <taxon>Mycobacterium tuberculosis complex</taxon>
    </lineage>
</organism>
<reference key="1">
    <citation type="journal article" date="2002" name="J. Bacteriol.">
        <title>Whole-genome comparison of Mycobacterium tuberculosis clinical and laboratory strains.</title>
        <authorList>
            <person name="Fleischmann R.D."/>
            <person name="Alland D."/>
            <person name="Eisen J.A."/>
            <person name="Carpenter L."/>
            <person name="White O."/>
            <person name="Peterson J.D."/>
            <person name="DeBoy R.T."/>
            <person name="Dodson R.J."/>
            <person name="Gwinn M.L."/>
            <person name="Haft D.H."/>
            <person name="Hickey E.K."/>
            <person name="Kolonay J.F."/>
            <person name="Nelson W.C."/>
            <person name="Umayam L.A."/>
            <person name="Ermolaeva M.D."/>
            <person name="Salzberg S.L."/>
            <person name="Delcher A."/>
            <person name="Utterback T.R."/>
            <person name="Weidman J.F."/>
            <person name="Khouri H.M."/>
            <person name="Gill J."/>
            <person name="Mikula A."/>
            <person name="Bishai W."/>
            <person name="Jacobs W.R. Jr."/>
            <person name="Venter J.C."/>
            <person name="Fraser C.M."/>
        </authorList>
    </citation>
    <scope>NUCLEOTIDE SEQUENCE [LARGE SCALE GENOMIC DNA]</scope>
    <source>
        <strain>CDC 1551 / Oshkosh</strain>
    </source>
</reference>
<accession>P9WL16</accession>
<accession>L0TCM9</accession>
<accession>P65057</accession>
<accession>Q10972</accession>
<feature type="chain" id="PRO_0000427557" description="Uncharacterized protein MT2996">
    <location>
        <begin position="1"/>
        <end position="207"/>
    </location>
</feature>
<proteinExistence type="predicted"/>
<evidence type="ECO:0000305" key="1"/>
<protein>
    <recommendedName>
        <fullName>Uncharacterized protein MT2996</fullName>
    </recommendedName>
</protein>
<name>Y2926_MYCTO</name>
<sequence>MDLGGVRRRISLMARQHGPTAQRHVASPMTVDIARLGRRPGAMFELHDTVHSPARIGLELIAIDQGALLDLDLRVESVSEGVLVTGTVAAPTVGECARCLSPVRGRVQVALTELFAYPDSATDETTEEDEVGRVVDETIDLEQPIIDAVGLELPFSPVCRPDCPGLCPQCGVPLASEPGHRHEQIDPRWAKLVEMLGPESDTLRGER</sequence>